<gene>
    <name evidence="1" type="primary">yejL</name>
    <name type="ordered locus">SBO_2137</name>
</gene>
<organism>
    <name type="scientific">Shigella boydii serotype 4 (strain Sb227)</name>
    <dbReference type="NCBI Taxonomy" id="300268"/>
    <lineage>
        <taxon>Bacteria</taxon>
        <taxon>Pseudomonadati</taxon>
        <taxon>Pseudomonadota</taxon>
        <taxon>Gammaproteobacteria</taxon>
        <taxon>Enterobacterales</taxon>
        <taxon>Enterobacteriaceae</taxon>
        <taxon>Shigella</taxon>
    </lineage>
</organism>
<dbReference type="EMBL" id="CP000036">
    <property type="protein sequence ID" value="ABB66714.1"/>
    <property type="molecule type" value="Genomic_DNA"/>
</dbReference>
<dbReference type="RefSeq" id="WP_001135667.1">
    <property type="nucleotide sequence ID" value="NC_007613.1"/>
</dbReference>
<dbReference type="SMR" id="Q31YZ4"/>
<dbReference type="KEGG" id="sbo:SBO_2137"/>
<dbReference type="HOGENOM" id="CLU_175457_0_0_6"/>
<dbReference type="Proteomes" id="UP000007067">
    <property type="component" value="Chromosome"/>
</dbReference>
<dbReference type="FunFam" id="1.10.3390.10:FF:000001">
    <property type="entry name" value="UPF0352 protein YejL"/>
    <property type="match status" value="1"/>
</dbReference>
<dbReference type="Gene3D" id="1.10.3390.10">
    <property type="entry name" value="YejL-like"/>
    <property type="match status" value="1"/>
</dbReference>
<dbReference type="HAMAP" id="MF_00816">
    <property type="entry name" value="UPF0352"/>
    <property type="match status" value="1"/>
</dbReference>
<dbReference type="InterPro" id="IPR009857">
    <property type="entry name" value="UPF0352"/>
</dbReference>
<dbReference type="InterPro" id="IPR023202">
    <property type="entry name" value="YejL_sf"/>
</dbReference>
<dbReference type="NCBIfam" id="NF010242">
    <property type="entry name" value="PRK13689.1"/>
    <property type="match status" value="1"/>
</dbReference>
<dbReference type="Pfam" id="PF07208">
    <property type="entry name" value="DUF1414"/>
    <property type="match status" value="1"/>
</dbReference>
<dbReference type="PIRSF" id="PIRSF006188">
    <property type="entry name" value="UCP006188"/>
    <property type="match status" value="1"/>
</dbReference>
<dbReference type="SUPFAM" id="SSF158651">
    <property type="entry name" value="YejL-like"/>
    <property type="match status" value="1"/>
</dbReference>
<protein>
    <recommendedName>
        <fullName evidence="1">UPF0352 protein YejL</fullName>
    </recommendedName>
</protein>
<name>YEJL_SHIBS</name>
<proteinExistence type="inferred from homology"/>
<sequence length="75" mass="8288">MPQISRYSDEQVEQLLAELLNVLEKHKAPTDLSLMVLGNMVTNLINTSIAPAQRQAIANSFARALQSSINEDKAH</sequence>
<evidence type="ECO:0000255" key="1">
    <source>
        <dbReference type="HAMAP-Rule" id="MF_00816"/>
    </source>
</evidence>
<accession>Q31YZ4</accession>
<feature type="chain" id="PRO_1000062314" description="UPF0352 protein YejL">
    <location>
        <begin position="1"/>
        <end position="75"/>
    </location>
</feature>
<comment type="similarity">
    <text evidence="1">Belongs to the UPF0352 family.</text>
</comment>
<reference key="1">
    <citation type="journal article" date="2005" name="Nucleic Acids Res.">
        <title>Genome dynamics and diversity of Shigella species, the etiologic agents of bacillary dysentery.</title>
        <authorList>
            <person name="Yang F."/>
            <person name="Yang J."/>
            <person name="Zhang X."/>
            <person name="Chen L."/>
            <person name="Jiang Y."/>
            <person name="Yan Y."/>
            <person name="Tang X."/>
            <person name="Wang J."/>
            <person name="Xiong Z."/>
            <person name="Dong J."/>
            <person name="Xue Y."/>
            <person name="Zhu Y."/>
            <person name="Xu X."/>
            <person name="Sun L."/>
            <person name="Chen S."/>
            <person name="Nie H."/>
            <person name="Peng J."/>
            <person name="Xu J."/>
            <person name="Wang Y."/>
            <person name="Yuan Z."/>
            <person name="Wen Y."/>
            <person name="Yao Z."/>
            <person name="Shen Y."/>
            <person name="Qiang B."/>
            <person name="Hou Y."/>
            <person name="Yu J."/>
            <person name="Jin Q."/>
        </authorList>
    </citation>
    <scope>NUCLEOTIDE SEQUENCE [LARGE SCALE GENOMIC DNA]</scope>
    <source>
        <strain>Sb227</strain>
    </source>
</reference>